<reference key="1">
    <citation type="submission" date="2006-03" db="EMBL/GenBank/DDBJ databases">
        <title>Complete sequence of chromosome of Nitrobacter hamburgensis X14.</title>
        <authorList>
            <consortium name="US DOE Joint Genome Institute"/>
            <person name="Copeland A."/>
            <person name="Lucas S."/>
            <person name="Lapidus A."/>
            <person name="Barry K."/>
            <person name="Detter J.C."/>
            <person name="Glavina del Rio T."/>
            <person name="Hammon N."/>
            <person name="Israni S."/>
            <person name="Dalin E."/>
            <person name="Tice H."/>
            <person name="Pitluck S."/>
            <person name="Chain P."/>
            <person name="Malfatti S."/>
            <person name="Shin M."/>
            <person name="Vergez L."/>
            <person name="Schmutz J."/>
            <person name="Larimer F."/>
            <person name="Land M."/>
            <person name="Hauser L."/>
            <person name="Kyrpides N."/>
            <person name="Ivanova N."/>
            <person name="Ward B."/>
            <person name="Arp D."/>
            <person name="Klotz M."/>
            <person name="Stein L."/>
            <person name="O'Mullan G."/>
            <person name="Starkenburg S."/>
            <person name="Sayavedra L."/>
            <person name="Poret-Peterson A.T."/>
            <person name="Gentry M.E."/>
            <person name="Bruce D."/>
            <person name="Richardson P."/>
        </authorList>
    </citation>
    <scope>NUCLEOTIDE SEQUENCE [LARGE SCALE GENOMIC DNA]</scope>
    <source>
        <strain>DSM 10229 / NCIMB 13809 / X14</strain>
    </source>
</reference>
<evidence type="ECO:0000255" key="1">
    <source>
        <dbReference type="HAMAP-Rule" id="MF_00183"/>
    </source>
</evidence>
<proteinExistence type="inferred from homology"/>
<dbReference type="EC" id="1.1.1.267" evidence="1"/>
<dbReference type="EMBL" id="CP000319">
    <property type="protein sequence ID" value="ABE62516.1"/>
    <property type="molecule type" value="Genomic_DNA"/>
</dbReference>
<dbReference type="RefSeq" id="WP_011510198.1">
    <property type="nucleotide sequence ID" value="NC_007964.1"/>
</dbReference>
<dbReference type="SMR" id="Q1QMN1"/>
<dbReference type="STRING" id="323097.Nham_1700"/>
<dbReference type="KEGG" id="nha:Nham_1700"/>
<dbReference type="eggNOG" id="COG0743">
    <property type="taxonomic scope" value="Bacteria"/>
</dbReference>
<dbReference type="HOGENOM" id="CLU_035714_0_1_5"/>
<dbReference type="OrthoDB" id="9806546at2"/>
<dbReference type="UniPathway" id="UPA00056">
    <property type="reaction ID" value="UER00092"/>
</dbReference>
<dbReference type="Proteomes" id="UP000001953">
    <property type="component" value="Chromosome"/>
</dbReference>
<dbReference type="GO" id="GO:0030604">
    <property type="term" value="F:1-deoxy-D-xylulose-5-phosphate reductoisomerase activity"/>
    <property type="evidence" value="ECO:0007669"/>
    <property type="project" value="UniProtKB-UniRule"/>
</dbReference>
<dbReference type="GO" id="GO:0030145">
    <property type="term" value="F:manganese ion binding"/>
    <property type="evidence" value="ECO:0007669"/>
    <property type="project" value="TreeGrafter"/>
</dbReference>
<dbReference type="GO" id="GO:0070402">
    <property type="term" value="F:NADPH binding"/>
    <property type="evidence" value="ECO:0007669"/>
    <property type="project" value="InterPro"/>
</dbReference>
<dbReference type="GO" id="GO:0051484">
    <property type="term" value="P:isopentenyl diphosphate biosynthetic process, methylerythritol 4-phosphate pathway involved in terpenoid biosynthetic process"/>
    <property type="evidence" value="ECO:0007669"/>
    <property type="project" value="TreeGrafter"/>
</dbReference>
<dbReference type="FunFam" id="3.40.50.720:FF:000045">
    <property type="entry name" value="1-deoxy-D-xylulose 5-phosphate reductoisomerase"/>
    <property type="match status" value="1"/>
</dbReference>
<dbReference type="Gene3D" id="1.10.1740.10">
    <property type="match status" value="1"/>
</dbReference>
<dbReference type="Gene3D" id="3.40.50.720">
    <property type="entry name" value="NAD(P)-binding Rossmann-like Domain"/>
    <property type="match status" value="1"/>
</dbReference>
<dbReference type="HAMAP" id="MF_00183">
    <property type="entry name" value="DXP_reductoisom"/>
    <property type="match status" value="1"/>
</dbReference>
<dbReference type="InterPro" id="IPR003821">
    <property type="entry name" value="DXP_reductoisomerase"/>
</dbReference>
<dbReference type="InterPro" id="IPR013644">
    <property type="entry name" value="DXP_reductoisomerase_C"/>
</dbReference>
<dbReference type="InterPro" id="IPR013512">
    <property type="entry name" value="DXP_reductoisomerase_N"/>
</dbReference>
<dbReference type="InterPro" id="IPR026877">
    <property type="entry name" value="DXPR_C"/>
</dbReference>
<dbReference type="InterPro" id="IPR036169">
    <property type="entry name" value="DXPR_C_sf"/>
</dbReference>
<dbReference type="InterPro" id="IPR036291">
    <property type="entry name" value="NAD(P)-bd_dom_sf"/>
</dbReference>
<dbReference type="NCBIfam" id="TIGR00243">
    <property type="entry name" value="Dxr"/>
    <property type="match status" value="1"/>
</dbReference>
<dbReference type="PANTHER" id="PTHR30525">
    <property type="entry name" value="1-DEOXY-D-XYLULOSE 5-PHOSPHATE REDUCTOISOMERASE"/>
    <property type="match status" value="1"/>
</dbReference>
<dbReference type="PANTHER" id="PTHR30525:SF0">
    <property type="entry name" value="1-DEOXY-D-XYLULOSE 5-PHOSPHATE REDUCTOISOMERASE, CHLOROPLASTIC"/>
    <property type="match status" value="1"/>
</dbReference>
<dbReference type="Pfam" id="PF08436">
    <property type="entry name" value="DXP_redisom_C"/>
    <property type="match status" value="1"/>
</dbReference>
<dbReference type="Pfam" id="PF02670">
    <property type="entry name" value="DXP_reductoisom"/>
    <property type="match status" value="1"/>
</dbReference>
<dbReference type="Pfam" id="PF13288">
    <property type="entry name" value="DXPR_C"/>
    <property type="match status" value="1"/>
</dbReference>
<dbReference type="PIRSF" id="PIRSF006205">
    <property type="entry name" value="Dxp_reductismrs"/>
    <property type="match status" value="1"/>
</dbReference>
<dbReference type="SUPFAM" id="SSF69055">
    <property type="entry name" value="1-deoxy-D-xylulose-5-phosphate reductoisomerase, C-terminal domain"/>
    <property type="match status" value="1"/>
</dbReference>
<dbReference type="SUPFAM" id="SSF55347">
    <property type="entry name" value="Glyceraldehyde-3-phosphate dehydrogenase-like, C-terminal domain"/>
    <property type="match status" value="1"/>
</dbReference>
<dbReference type="SUPFAM" id="SSF51735">
    <property type="entry name" value="NAD(P)-binding Rossmann-fold domains"/>
    <property type="match status" value="1"/>
</dbReference>
<sequence length="407" mass="42554">MGAVPLKNNKPVEAGVRTVTVLGATGSIGDSTMDLLRGAPGRYRVEALTANSNVEALVKLAREFAARFVAVADPARFGELKDALAGSGIECGVGESAIIEAASRPADWLMAAVSGAAGLKPALAAVDRGTTIALANKECLVCAGDFFMQRAAKAGACILPADSEHNALFQALSSGNRDELTRVIITASGGPFRTWAAADIEKATLAQALKHPNWSMGRKITIDSASMMNKGLEVIEAACLFTLTPDEIDVLVHPQSIVHGMVEFSDRSVVAQLGTPDMRTPIAHCLGWPERIVGPAAKLDLASIGQLTFEAPDFTRFPALRLAYDALRTGNGATTVYNAANEIAVAAFIGEKIRFGAIARLVEATMNGWVRAGNLAPLASADDAIAIDHNARNMAASLLPQIAAKAT</sequence>
<organism>
    <name type="scientific">Nitrobacter hamburgensis (strain DSM 10229 / NCIMB 13809 / X14)</name>
    <dbReference type="NCBI Taxonomy" id="323097"/>
    <lineage>
        <taxon>Bacteria</taxon>
        <taxon>Pseudomonadati</taxon>
        <taxon>Pseudomonadota</taxon>
        <taxon>Alphaproteobacteria</taxon>
        <taxon>Hyphomicrobiales</taxon>
        <taxon>Nitrobacteraceae</taxon>
        <taxon>Nitrobacter</taxon>
    </lineage>
</organism>
<protein>
    <recommendedName>
        <fullName evidence="1">1-deoxy-D-xylulose 5-phosphate reductoisomerase</fullName>
        <shortName evidence="1">DXP reductoisomerase</shortName>
        <ecNumber evidence="1">1.1.1.267</ecNumber>
    </recommendedName>
    <alternativeName>
        <fullName evidence="1">1-deoxyxylulose-5-phosphate reductoisomerase</fullName>
    </alternativeName>
    <alternativeName>
        <fullName evidence="1">2-C-methyl-D-erythritol 4-phosphate synthase</fullName>
    </alternativeName>
</protein>
<keyword id="KW-0414">Isoprene biosynthesis</keyword>
<keyword id="KW-0464">Manganese</keyword>
<keyword id="KW-0479">Metal-binding</keyword>
<keyword id="KW-0521">NADP</keyword>
<keyword id="KW-0560">Oxidoreductase</keyword>
<keyword id="KW-1185">Reference proteome</keyword>
<comment type="function">
    <text evidence="1">Catalyzes the NADPH-dependent rearrangement and reduction of 1-deoxy-D-xylulose-5-phosphate (DXP) to 2-C-methyl-D-erythritol 4-phosphate (MEP).</text>
</comment>
<comment type="catalytic activity">
    <reaction evidence="1">
        <text>2-C-methyl-D-erythritol 4-phosphate + NADP(+) = 1-deoxy-D-xylulose 5-phosphate + NADPH + H(+)</text>
        <dbReference type="Rhea" id="RHEA:13717"/>
        <dbReference type="ChEBI" id="CHEBI:15378"/>
        <dbReference type="ChEBI" id="CHEBI:57783"/>
        <dbReference type="ChEBI" id="CHEBI:57792"/>
        <dbReference type="ChEBI" id="CHEBI:58262"/>
        <dbReference type="ChEBI" id="CHEBI:58349"/>
        <dbReference type="EC" id="1.1.1.267"/>
    </reaction>
    <physiologicalReaction direction="right-to-left" evidence="1">
        <dbReference type="Rhea" id="RHEA:13719"/>
    </physiologicalReaction>
</comment>
<comment type="cofactor">
    <cofactor evidence="1">
        <name>Mg(2+)</name>
        <dbReference type="ChEBI" id="CHEBI:18420"/>
    </cofactor>
    <cofactor evidence="1">
        <name>Mn(2+)</name>
        <dbReference type="ChEBI" id="CHEBI:29035"/>
    </cofactor>
</comment>
<comment type="pathway">
    <text evidence="1">Isoprenoid biosynthesis; isopentenyl diphosphate biosynthesis via DXP pathway; isopentenyl diphosphate from 1-deoxy-D-xylulose 5-phosphate: step 1/6.</text>
</comment>
<comment type="similarity">
    <text evidence="1">Belongs to the DXR family.</text>
</comment>
<gene>
    <name evidence="1" type="primary">dxr</name>
    <name type="ordered locus">Nham_1700</name>
</gene>
<feature type="chain" id="PRO_1000020281" description="1-deoxy-D-xylulose 5-phosphate reductoisomerase">
    <location>
        <begin position="1"/>
        <end position="407"/>
    </location>
</feature>
<feature type="binding site" evidence="1">
    <location>
        <position position="25"/>
    </location>
    <ligand>
        <name>NADPH</name>
        <dbReference type="ChEBI" id="CHEBI:57783"/>
    </ligand>
</feature>
<feature type="binding site" evidence="1">
    <location>
        <position position="26"/>
    </location>
    <ligand>
        <name>NADPH</name>
        <dbReference type="ChEBI" id="CHEBI:57783"/>
    </ligand>
</feature>
<feature type="binding site" evidence="1">
    <location>
        <position position="27"/>
    </location>
    <ligand>
        <name>NADPH</name>
        <dbReference type="ChEBI" id="CHEBI:57783"/>
    </ligand>
</feature>
<feature type="binding site" evidence="1">
    <location>
        <position position="28"/>
    </location>
    <ligand>
        <name>NADPH</name>
        <dbReference type="ChEBI" id="CHEBI:57783"/>
    </ligand>
</feature>
<feature type="binding site" evidence="1">
    <location>
        <position position="53"/>
    </location>
    <ligand>
        <name>NADPH</name>
        <dbReference type="ChEBI" id="CHEBI:57783"/>
    </ligand>
</feature>
<feature type="binding site" evidence="1">
    <location>
        <position position="136"/>
    </location>
    <ligand>
        <name>NADPH</name>
        <dbReference type="ChEBI" id="CHEBI:57783"/>
    </ligand>
</feature>
<feature type="binding site" evidence="1">
    <location>
        <position position="137"/>
    </location>
    <ligand>
        <name>1-deoxy-D-xylulose 5-phosphate</name>
        <dbReference type="ChEBI" id="CHEBI:57792"/>
    </ligand>
</feature>
<feature type="binding site" evidence="1">
    <location>
        <position position="138"/>
    </location>
    <ligand>
        <name>NADPH</name>
        <dbReference type="ChEBI" id="CHEBI:57783"/>
    </ligand>
</feature>
<feature type="binding site" evidence="1">
    <location>
        <position position="162"/>
    </location>
    <ligand>
        <name>Mn(2+)</name>
        <dbReference type="ChEBI" id="CHEBI:29035"/>
    </ligand>
</feature>
<feature type="binding site" evidence="1">
    <location>
        <position position="163"/>
    </location>
    <ligand>
        <name>1-deoxy-D-xylulose 5-phosphate</name>
        <dbReference type="ChEBI" id="CHEBI:57792"/>
    </ligand>
</feature>
<feature type="binding site" evidence="1">
    <location>
        <position position="164"/>
    </location>
    <ligand>
        <name>1-deoxy-D-xylulose 5-phosphate</name>
        <dbReference type="ChEBI" id="CHEBI:57792"/>
    </ligand>
</feature>
<feature type="binding site" evidence="1">
    <location>
        <position position="164"/>
    </location>
    <ligand>
        <name>Mn(2+)</name>
        <dbReference type="ChEBI" id="CHEBI:29035"/>
    </ligand>
</feature>
<feature type="binding site" evidence="1">
    <location>
        <position position="188"/>
    </location>
    <ligand>
        <name>1-deoxy-D-xylulose 5-phosphate</name>
        <dbReference type="ChEBI" id="CHEBI:57792"/>
    </ligand>
</feature>
<feature type="binding site" evidence="1">
    <location>
        <position position="211"/>
    </location>
    <ligand>
        <name>1-deoxy-D-xylulose 5-phosphate</name>
        <dbReference type="ChEBI" id="CHEBI:57792"/>
    </ligand>
</feature>
<feature type="binding site" evidence="1">
    <location>
        <position position="217"/>
    </location>
    <ligand>
        <name>NADPH</name>
        <dbReference type="ChEBI" id="CHEBI:57783"/>
    </ligand>
</feature>
<feature type="binding site" evidence="1">
    <location>
        <position position="224"/>
    </location>
    <ligand>
        <name>1-deoxy-D-xylulose 5-phosphate</name>
        <dbReference type="ChEBI" id="CHEBI:57792"/>
    </ligand>
</feature>
<feature type="binding site" evidence="1">
    <location>
        <position position="229"/>
    </location>
    <ligand>
        <name>1-deoxy-D-xylulose 5-phosphate</name>
        <dbReference type="ChEBI" id="CHEBI:57792"/>
    </ligand>
</feature>
<feature type="binding site" evidence="1">
    <location>
        <position position="230"/>
    </location>
    <ligand>
        <name>1-deoxy-D-xylulose 5-phosphate</name>
        <dbReference type="ChEBI" id="CHEBI:57792"/>
    </ligand>
</feature>
<feature type="binding site" evidence="1">
    <location>
        <position position="233"/>
    </location>
    <ligand>
        <name>1-deoxy-D-xylulose 5-phosphate</name>
        <dbReference type="ChEBI" id="CHEBI:57792"/>
    </ligand>
</feature>
<feature type="binding site" evidence="1">
    <location>
        <position position="233"/>
    </location>
    <ligand>
        <name>Mn(2+)</name>
        <dbReference type="ChEBI" id="CHEBI:29035"/>
    </ligand>
</feature>
<name>DXR_NITHX</name>
<accession>Q1QMN1</accession>